<proteinExistence type="inferred from homology"/>
<accession>Q54CS8</accession>
<protein>
    <recommendedName>
        <fullName evidence="4">Peroxisomal ATPase PEX6</fullName>
        <ecNumber evidence="1">3.6.4.-</ecNumber>
    </recommendedName>
    <alternativeName>
        <fullName>Peroxin-6</fullName>
    </alternativeName>
    <alternativeName>
        <fullName>Peroxisomal biogenesis factor 6</fullName>
    </alternativeName>
</protein>
<keyword id="KW-0067">ATP-binding</keyword>
<keyword id="KW-0963">Cytoplasm</keyword>
<keyword id="KW-0378">Hydrolase</keyword>
<keyword id="KW-0472">Membrane</keyword>
<keyword id="KW-0547">Nucleotide-binding</keyword>
<keyword id="KW-0576">Peroxisome</keyword>
<keyword id="KW-0962">Peroxisome biogenesis</keyword>
<keyword id="KW-1185">Reference proteome</keyword>
<feature type="chain" id="PRO_0000365734" description="Peroxisomal ATPase PEX6">
    <location>
        <begin position="1"/>
        <end position="1201"/>
    </location>
</feature>
<feature type="region of interest" description="Disordered" evidence="3">
    <location>
        <begin position="247"/>
        <end position="300"/>
    </location>
</feature>
<feature type="compositionally biased region" description="Low complexity" evidence="3">
    <location>
        <begin position="250"/>
        <end position="280"/>
    </location>
</feature>
<feature type="compositionally biased region" description="Acidic residues" evidence="3">
    <location>
        <begin position="284"/>
        <end position="297"/>
    </location>
</feature>
<feature type="binding site" evidence="2">
    <location>
        <begin position="959"/>
        <end position="966"/>
    </location>
    <ligand>
        <name>ATP</name>
        <dbReference type="ChEBI" id="CHEBI:30616"/>
    </ligand>
</feature>
<organism>
    <name type="scientific">Dictyostelium discoideum</name>
    <name type="common">Social amoeba</name>
    <dbReference type="NCBI Taxonomy" id="44689"/>
    <lineage>
        <taxon>Eukaryota</taxon>
        <taxon>Amoebozoa</taxon>
        <taxon>Evosea</taxon>
        <taxon>Eumycetozoa</taxon>
        <taxon>Dictyostelia</taxon>
        <taxon>Dictyosteliales</taxon>
        <taxon>Dictyosteliaceae</taxon>
        <taxon>Dictyostelium</taxon>
    </lineage>
</organism>
<evidence type="ECO:0000250" key="1">
    <source>
        <dbReference type="UniProtKB" id="Q13608"/>
    </source>
</evidence>
<evidence type="ECO:0000255" key="2"/>
<evidence type="ECO:0000256" key="3">
    <source>
        <dbReference type="SAM" id="MobiDB-lite"/>
    </source>
</evidence>
<evidence type="ECO:0000305" key="4"/>
<name>PEX6_DICDI</name>
<gene>
    <name type="primary">pex6</name>
    <name type="ORF">DDB_G0292788</name>
</gene>
<comment type="function">
    <text evidence="1">Component of the PEX1-PEX6 AAA ATPase complex, a protein dislocase complex that mediates the ATP-dependent extraction of the PEX5 receptor from peroxisomal membranes, an essential step for PEX5 recycling. Specifically recognizes PEX5 monoubiquitinated at 'Cys-11', and pulls it out of the peroxisome lumen through the PEX2-PEX10-PEX12 retrotranslocation channel. Extraction by the PEX1-PEX6 AAA ATPase complex is accompanied by unfolding of the TPR repeats and release of bound cargo from PEX5.</text>
</comment>
<comment type="catalytic activity">
    <reaction evidence="1">
        <text>ATP + H2O = ADP + phosphate + H(+)</text>
        <dbReference type="Rhea" id="RHEA:13065"/>
        <dbReference type="ChEBI" id="CHEBI:15377"/>
        <dbReference type="ChEBI" id="CHEBI:15378"/>
        <dbReference type="ChEBI" id="CHEBI:30616"/>
        <dbReference type="ChEBI" id="CHEBI:43474"/>
        <dbReference type="ChEBI" id="CHEBI:456216"/>
    </reaction>
    <physiologicalReaction direction="left-to-right" evidence="1">
        <dbReference type="Rhea" id="RHEA:13066"/>
    </physiologicalReaction>
</comment>
<comment type="subunit">
    <text evidence="1">Interacts with PEX1; forming the PEX1-PEX6 AAA ATPase complex, which is composed of a heterohexamer formed by a trimer of PEX1-PEX6 dimers.</text>
</comment>
<comment type="subcellular location">
    <subcellularLocation>
        <location evidence="1">Cytoplasm</location>
        <location evidence="1">Cytosol</location>
    </subcellularLocation>
    <subcellularLocation>
        <location evidence="1">Peroxisome membrane</location>
    </subcellularLocation>
</comment>
<comment type="similarity">
    <text evidence="4">Belongs to the AAA ATPase family.</text>
</comment>
<reference key="1">
    <citation type="journal article" date="2005" name="Nature">
        <title>The genome of the social amoeba Dictyostelium discoideum.</title>
        <authorList>
            <person name="Eichinger L."/>
            <person name="Pachebat J.A."/>
            <person name="Gloeckner G."/>
            <person name="Rajandream M.A."/>
            <person name="Sucgang R."/>
            <person name="Berriman M."/>
            <person name="Song J."/>
            <person name="Olsen R."/>
            <person name="Szafranski K."/>
            <person name="Xu Q."/>
            <person name="Tunggal B."/>
            <person name="Kummerfeld S."/>
            <person name="Madera M."/>
            <person name="Konfortov B.A."/>
            <person name="Rivero F."/>
            <person name="Bankier A.T."/>
            <person name="Lehmann R."/>
            <person name="Hamlin N."/>
            <person name="Davies R."/>
            <person name="Gaudet P."/>
            <person name="Fey P."/>
            <person name="Pilcher K."/>
            <person name="Chen G."/>
            <person name="Saunders D."/>
            <person name="Sodergren E.J."/>
            <person name="Davis P."/>
            <person name="Kerhornou A."/>
            <person name="Nie X."/>
            <person name="Hall N."/>
            <person name="Anjard C."/>
            <person name="Hemphill L."/>
            <person name="Bason N."/>
            <person name="Farbrother P."/>
            <person name="Desany B."/>
            <person name="Just E."/>
            <person name="Morio T."/>
            <person name="Rost R."/>
            <person name="Churcher C.M."/>
            <person name="Cooper J."/>
            <person name="Haydock S."/>
            <person name="van Driessche N."/>
            <person name="Cronin A."/>
            <person name="Goodhead I."/>
            <person name="Muzny D.M."/>
            <person name="Mourier T."/>
            <person name="Pain A."/>
            <person name="Lu M."/>
            <person name="Harper D."/>
            <person name="Lindsay R."/>
            <person name="Hauser H."/>
            <person name="James K.D."/>
            <person name="Quiles M."/>
            <person name="Madan Babu M."/>
            <person name="Saito T."/>
            <person name="Buchrieser C."/>
            <person name="Wardroper A."/>
            <person name="Felder M."/>
            <person name="Thangavelu M."/>
            <person name="Johnson D."/>
            <person name="Knights A."/>
            <person name="Loulseged H."/>
            <person name="Mungall K.L."/>
            <person name="Oliver K."/>
            <person name="Price C."/>
            <person name="Quail M.A."/>
            <person name="Urushihara H."/>
            <person name="Hernandez J."/>
            <person name="Rabbinowitsch E."/>
            <person name="Steffen D."/>
            <person name="Sanders M."/>
            <person name="Ma J."/>
            <person name="Kohara Y."/>
            <person name="Sharp S."/>
            <person name="Simmonds M.N."/>
            <person name="Spiegler S."/>
            <person name="Tivey A."/>
            <person name="Sugano S."/>
            <person name="White B."/>
            <person name="Walker D."/>
            <person name="Woodward J.R."/>
            <person name="Winckler T."/>
            <person name="Tanaka Y."/>
            <person name="Shaulsky G."/>
            <person name="Schleicher M."/>
            <person name="Weinstock G.M."/>
            <person name="Rosenthal A."/>
            <person name="Cox E.C."/>
            <person name="Chisholm R.L."/>
            <person name="Gibbs R.A."/>
            <person name="Loomis W.F."/>
            <person name="Platzer M."/>
            <person name="Kay R.R."/>
            <person name="Williams J.G."/>
            <person name="Dear P.H."/>
            <person name="Noegel A.A."/>
            <person name="Barrell B.G."/>
            <person name="Kuspa A."/>
        </authorList>
    </citation>
    <scope>NUCLEOTIDE SEQUENCE [LARGE SCALE GENOMIC DNA]</scope>
    <source>
        <strain>AX4</strain>
    </source>
</reference>
<dbReference type="EC" id="3.6.4.-" evidence="1"/>
<dbReference type="EMBL" id="AAFI02000196">
    <property type="protein sequence ID" value="EAL61068.1"/>
    <property type="molecule type" value="Genomic_DNA"/>
</dbReference>
<dbReference type="RefSeq" id="XP_629463.1">
    <property type="nucleotide sequence ID" value="XM_629461.1"/>
</dbReference>
<dbReference type="SMR" id="Q54CS8"/>
<dbReference type="FunCoup" id="Q54CS8">
    <property type="interactions" value="130"/>
</dbReference>
<dbReference type="STRING" id="44689.Q54CS8"/>
<dbReference type="PaxDb" id="44689-DDB0238049"/>
<dbReference type="EnsemblProtists" id="EAL61068">
    <property type="protein sequence ID" value="EAL61068"/>
    <property type="gene ID" value="DDB_G0292788"/>
</dbReference>
<dbReference type="GeneID" id="8628853"/>
<dbReference type="KEGG" id="ddi:DDB_G0292788"/>
<dbReference type="dictyBase" id="DDB_G0292788">
    <property type="gene designation" value="pex6"/>
</dbReference>
<dbReference type="VEuPathDB" id="AmoebaDB:DDB_G0292788"/>
<dbReference type="eggNOG" id="KOG0736">
    <property type="taxonomic scope" value="Eukaryota"/>
</dbReference>
<dbReference type="HOGENOM" id="CLU_000688_0_8_1"/>
<dbReference type="InParanoid" id="Q54CS8"/>
<dbReference type="OMA" id="YYHKVQK"/>
<dbReference type="PhylomeDB" id="Q54CS8"/>
<dbReference type="PRO" id="PR:Q54CS8"/>
<dbReference type="Proteomes" id="UP000002195">
    <property type="component" value="Chromosome 6"/>
</dbReference>
<dbReference type="GO" id="GO:0005829">
    <property type="term" value="C:cytosol"/>
    <property type="evidence" value="ECO:0000318"/>
    <property type="project" value="GO_Central"/>
</dbReference>
<dbReference type="GO" id="GO:0005778">
    <property type="term" value="C:peroxisomal membrane"/>
    <property type="evidence" value="ECO:0000318"/>
    <property type="project" value="GO_Central"/>
</dbReference>
<dbReference type="GO" id="GO:0005777">
    <property type="term" value="C:peroxisome"/>
    <property type="evidence" value="ECO:0000250"/>
    <property type="project" value="dictyBase"/>
</dbReference>
<dbReference type="GO" id="GO:0005524">
    <property type="term" value="F:ATP binding"/>
    <property type="evidence" value="ECO:0007669"/>
    <property type="project" value="UniProtKB-KW"/>
</dbReference>
<dbReference type="GO" id="GO:0016887">
    <property type="term" value="F:ATP hydrolysis activity"/>
    <property type="evidence" value="ECO:0000318"/>
    <property type="project" value="GO_Central"/>
</dbReference>
<dbReference type="GO" id="GO:0007031">
    <property type="term" value="P:peroxisome organization"/>
    <property type="evidence" value="ECO:0000250"/>
    <property type="project" value="dictyBase"/>
</dbReference>
<dbReference type="GO" id="GO:0016558">
    <property type="term" value="P:protein import into peroxisome matrix"/>
    <property type="evidence" value="ECO:0000318"/>
    <property type="project" value="GO_Central"/>
</dbReference>
<dbReference type="GO" id="GO:0043335">
    <property type="term" value="P:protein unfolding"/>
    <property type="evidence" value="ECO:0000318"/>
    <property type="project" value="GO_Central"/>
</dbReference>
<dbReference type="CDD" id="cd19527">
    <property type="entry name" value="RecA-like_PEX6_r2"/>
    <property type="match status" value="1"/>
</dbReference>
<dbReference type="FunFam" id="3.40.50.300:FF:000109">
    <property type="entry name" value="Peroxisomal biogenesis factor 6"/>
    <property type="match status" value="1"/>
</dbReference>
<dbReference type="FunFam" id="3.40.50.300:FF:003768">
    <property type="entry name" value="Peroxisomal biogenesis factor 6"/>
    <property type="match status" value="1"/>
</dbReference>
<dbReference type="FunFam" id="1.10.8.60:FF:000039">
    <property type="entry name" value="peroxisome biogenesis factor 6"/>
    <property type="match status" value="1"/>
</dbReference>
<dbReference type="Gene3D" id="1.10.8.60">
    <property type="match status" value="2"/>
</dbReference>
<dbReference type="Gene3D" id="3.40.50.300">
    <property type="entry name" value="P-loop containing nucleotide triphosphate hydrolases"/>
    <property type="match status" value="2"/>
</dbReference>
<dbReference type="InterPro" id="IPR003593">
    <property type="entry name" value="AAA+_ATPase"/>
</dbReference>
<dbReference type="InterPro" id="IPR050168">
    <property type="entry name" value="AAA_ATPase_domain"/>
</dbReference>
<dbReference type="InterPro" id="IPR003959">
    <property type="entry name" value="ATPase_AAA_core"/>
</dbReference>
<dbReference type="InterPro" id="IPR003960">
    <property type="entry name" value="ATPase_AAA_CS"/>
</dbReference>
<dbReference type="InterPro" id="IPR027417">
    <property type="entry name" value="P-loop_NTPase"/>
</dbReference>
<dbReference type="InterPro" id="IPR056995">
    <property type="entry name" value="PEX6_4th_dom"/>
</dbReference>
<dbReference type="InterPro" id="IPR047533">
    <property type="entry name" value="RecA-like_PEX6_r2"/>
</dbReference>
<dbReference type="PANTHER" id="PTHR23077">
    <property type="entry name" value="AAA-FAMILY ATPASE"/>
    <property type="match status" value="1"/>
</dbReference>
<dbReference type="PANTHER" id="PTHR23077:SF9">
    <property type="entry name" value="PEROXISOMAL ATPASE PEX6"/>
    <property type="match status" value="1"/>
</dbReference>
<dbReference type="Pfam" id="PF00004">
    <property type="entry name" value="AAA"/>
    <property type="match status" value="2"/>
</dbReference>
<dbReference type="Pfam" id="PF23315">
    <property type="entry name" value="PEX6_4th"/>
    <property type="match status" value="1"/>
</dbReference>
<dbReference type="SMART" id="SM00382">
    <property type="entry name" value="AAA"/>
    <property type="match status" value="2"/>
</dbReference>
<dbReference type="SUPFAM" id="SSF52540">
    <property type="entry name" value="P-loop containing nucleoside triphosphate hydrolases"/>
    <property type="match status" value="2"/>
</dbReference>
<dbReference type="PROSITE" id="PS00674">
    <property type="entry name" value="AAA"/>
    <property type="match status" value="1"/>
</dbReference>
<sequence length="1201" mass="137009">MIGLFKDEWFNISILNDNLFLKRYCYESNNNNNNNNTLYTIIVPFDKSINPSQFDPSTINDYFIFLYKNTKKINLNSINKLQYKSNKKEILVSFDITYIHNSNNNNNNNNNKLKSVLISNSCSKKLNLFNNDIVHLKPIKKKLTVLQRVVLLANDNESFIESSNPSESSSSTTTINSKYLVNEEFRNYLVENSILFQSPNNIVIENHQKHKSFSYKVLECFPLLQGTVSNSTTIIIISPDDKILNTLPSNNNNNNNNNNNNNNNNNNNNNNNNNNNNNNNNKEEEVEEEEVEVEEEEKDNKLKLNNNLRLSNFIIHPIINISNNTTTKNEDIGDSNNLFHFTPSSKGILSNNKKFINISQLKSIPTEIDFEFDISKEYDYLVDCLVSLNTLKSLNLFNGSWIKIKNITNNNNNNNNKEYEIAIRIFSITSSLKLKDQVLYLPPISIFNLNIDYKNFLKLSNYEIISNQFELILLKSNKPNINNNNNNDSFPINYPTANRIKISRIKNQNSSGYKSYSHQLEKYFQKKRLLKQNDIIVISTKVNNEEELINSNNSNNNNNYNNNNNNNNNNNLVYFKVEIILCNQFENINGNQIYLIDKNTTSIIQEGSSNSMVPSKIESFYWRGGDQEESKDNSMVPLELIYENEFKTIVDLISPFLMGDKFSFDFNCTLLLNGPQGVGKRTLLNRVAKQMGIHVYEVDCYKLYDFVESKKDWNIRNVLEQASNSTPTLLILKNFEVLEQTAQSMQQEKKESNLSQTLINILKDINDSNTSNINSNKYPLIITVTVNSMDELSNKVRNWFKHEITLNSPDENQRFKILKYLTKNLPIDIGNTVSIKNLSIRTASFLNSNLRALIQRSSINALKRVLSIQQMMNDEIKPIEIYNCGFLVMGDDIQKSLSEMQEYQSSSIGAPKIPNVSWDDVGGLANVKSEIMDTIQLPLEHPHLFASGIGKRSGILLFGPPGTGKTLLAKAIATECSLNFLSVKGPELINMYIGESEKNIREIFNKARQAKPCVIFFDELDSLAPSRGNGADSGGVMDRVVSQLLAELDGMQKSSDVFIIGATNRPDLLDSSLMRPGRLDRLLYLGISSEKENQFKILQALTRKFNLADDVDLRKVVENCPMNLTGADFYALASDAMSNAFHERITASINGEINEEEQNQKLIVYQNHFIKAVNSLVPSVSLDELEYYHKVQKQFSGNNKS</sequence>